<accession>E1V4Y0</accession>
<dbReference type="EC" id="4.2.1.-"/>
<dbReference type="EC" id="4.2.1.39"/>
<dbReference type="EC" id="4.2.1.8"/>
<dbReference type="EMBL" id="FN869568">
    <property type="protein sequence ID" value="CBV41029.1"/>
    <property type="molecule type" value="Genomic_DNA"/>
</dbReference>
<dbReference type="RefSeq" id="WP_013330904.1">
    <property type="nucleotide sequence ID" value="NC_014532.2"/>
</dbReference>
<dbReference type="SMR" id="E1V4Y0"/>
<dbReference type="STRING" id="768066.HELO_1146"/>
<dbReference type="GeneID" id="91008339"/>
<dbReference type="KEGG" id="hel:HELO_1146"/>
<dbReference type="eggNOG" id="COG4948">
    <property type="taxonomic scope" value="Bacteria"/>
</dbReference>
<dbReference type="HOGENOM" id="CLU_030273_6_1_6"/>
<dbReference type="OrthoDB" id="9782675at2"/>
<dbReference type="Proteomes" id="UP000008707">
    <property type="component" value="Chromosome"/>
</dbReference>
<dbReference type="GO" id="GO:0047929">
    <property type="term" value="F:gluconate dehydratase activity"/>
    <property type="evidence" value="ECO:0000314"/>
    <property type="project" value="UniProtKB"/>
</dbReference>
<dbReference type="GO" id="GO:0000287">
    <property type="term" value="F:magnesium ion binding"/>
    <property type="evidence" value="ECO:0000314"/>
    <property type="project" value="UniProtKB"/>
</dbReference>
<dbReference type="GO" id="GO:0008927">
    <property type="term" value="F:mannonate dehydratase activity"/>
    <property type="evidence" value="ECO:0000314"/>
    <property type="project" value="UniProtKB"/>
</dbReference>
<dbReference type="GO" id="GO:0009063">
    <property type="term" value="P:amino acid catabolic process"/>
    <property type="evidence" value="ECO:0007669"/>
    <property type="project" value="InterPro"/>
</dbReference>
<dbReference type="GO" id="GO:0016052">
    <property type="term" value="P:carbohydrate catabolic process"/>
    <property type="evidence" value="ECO:0000314"/>
    <property type="project" value="UniProtKB"/>
</dbReference>
<dbReference type="FunFam" id="3.20.20.120:FF:000004">
    <property type="entry name" value="D-galactonate dehydratase family protein"/>
    <property type="match status" value="1"/>
</dbReference>
<dbReference type="Gene3D" id="3.20.20.120">
    <property type="entry name" value="Enolase-like C-terminal domain"/>
    <property type="match status" value="1"/>
</dbReference>
<dbReference type="Gene3D" id="3.30.390.10">
    <property type="entry name" value="Enolase-like, N-terminal domain"/>
    <property type="match status" value="1"/>
</dbReference>
<dbReference type="InterPro" id="IPR034589">
    <property type="entry name" value="D-mannonate_dehydratase-like"/>
</dbReference>
<dbReference type="InterPro" id="IPR053379">
    <property type="entry name" value="D-mannonate_dehydratase_GalD"/>
</dbReference>
<dbReference type="InterPro" id="IPR034593">
    <property type="entry name" value="DgoD-like"/>
</dbReference>
<dbReference type="InterPro" id="IPR036849">
    <property type="entry name" value="Enolase-like_C_sf"/>
</dbReference>
<dbReference type="InterPro" id="IPR029017">
    <property type="entry name" value="Enolase-like_N"/>
</dbReference>
<dbReference type="InterPro" id="IPR029065">
    <property type="entry name" value="Enolase_C-like"/>
</dbReference>
<dbReference type="InterPro" id="IPR018110">
    <property type="entry name" value="Mandel_Rmase/mucon_lact_enz_CS"/>
</dbReference>
<dbReference type="InterPro" id="IPR013342">
    <property type="entry name" value="Mandelate_racemase_C"/>
</dbReference>
<dbReference type="InterPro" id="IPR013341">
    <property type="entry name" value="Mandelate_racemase_N_dom"/>
</dbReference>
<dbReference type="NCBIfam" id="NF043051">
    <property type="entry name" value="ManoateDhtManD"/>
    <property type="match status" value="1"/>
</dbReference>
<dbReference type="NCBIfam" id="NF011654">
    <property type="entry name" value="PRK15072.1"/>
    <property type="match status" value="1"/>
</dbReference>
<dbReference type="PANTHER" id="PTHR48080">
    <property type="entry name" value="D-GALACTONATE DEHYDRATASE-RELATED"/>
    <property type="match status" value="1"/>
</dbReference>
<dbReference type="PANTHER" id="PTHR48080:SF6">
    <property type="entry name" value="STARVATION-SENSING PROTEIN RSPA"/>
    <property type="match status" value="1"/>
</dbReference>
<dbReference type="Pfam" id="PF13378">
    <property type="entry name" value="MR_MLE_C"/>
    <property type="match status" value="1"/>
</dbReference>
<dbReference type="Pfam" id="PF02746">
    <property type="entry name" value="MR_MLE_N"/>
    <property type="match status" value="1"/>
</dbReference>
<dbReference type="SFLD" id="SFLDS00001">
    <property type="entry name" value="Enolase"/>
    <property type="match status" value="1"/>
</dbReference>
<dbReference type="SFLD" id="SFLDG00033">
    <property type="entry name" value="mannonate_dehydratase"/>
    <property type="match status" value="1"/>
</dbReference>
<dbReference type="SMART" id="SM00922">
    <property type="entry name" value="MR_MLE"/>
    <property type="match status" value="1"/>
</dbReference>
<dbReference type="SUPFAM" id="SSF51604">
    <property type="entry name" value="Enolase C-terminal domain-like"/>
    <property type="match status" value="1"/>
</dbReference>
<dbReference type="SUPFAM" id="SSF54826">
    <property type="entry name" value="Enolase N-terminal domain-like"/>
    <property type="match status" value="1"/>
</dbReference>
<dbReference type="PROSITE" id="PS00908">
    <property type="entry name" value="MR_MLE_1"/>
    <property type="match status" value="1"/>
</dbReference>
<sequence>MKIERAYTIVTAPGRNFVTLKIVTDEGTYGIGDATLNGREMAVVAYLEEHVIPALIGRDPQRIEDIWHYLYRGAYWRRGPVTMSAIGAVDMALWDIKAKVAGMPLYQLLGGKSRERVMVYGHATGKDIEACLDEVARHVEEGYRAVRVQAGVPGIASIYGVAKKPGERYEPADAELPAEHVWNTAKYLNHAPKLFAAVRERFGDDLHVLHDVHHRLTPIEAARLGKEVEPFNLFWLEDCVPAENQESFGLIRQHTTTPLAVGEVFNSLYDAKALIENQWIDYIRAPLTHAGGITHVRRLADLAGLYHVRTGFHGPTDLSPVCLGAAIHFDTWVPNFGIQEYMPHEAVTDEVFPHDYRFEDGHFLVGETPGHGVDIDEEKARKYPYRRASLPVNRLEDGTLWHW</sequence>
<proteinExistence type="evidence at protein level"/>
<name>DMGD_HALED</name>
<evidence type="ECO:0000250" key="1"/>
<evidence type="ECO:0000269" key="2">
    <source>
    </source>
</evidence>
<evidence type="ECO:0000305" key="3"/>
<reference key="1">
    <citation type="journal article" date="2011" name="Environ. Microbiol.">
        <title>A blueprint of ectoine metabolism from the genome of the industrial producer Halomonas elongata DSM 2581(T).</title>
        <authorList>
            <person name="Schwibbert K."/>
            <person name="Marin-Sanguino A."/>
            <person name="Bagyan I."/>
            <person name="Heidrich G."/>
            <person name="Lentzen G."/>
            <person name="Seitz H."/>
            <person name="Rampp M."/>
            <person name="Schuster S.C."/>
            <person name="Klenk H.P."/>
            <person name="Pfeiffer F."/>
            <person name="Oesterhelt D."/>
            <person name="Kunte H.J."/>
        </authorList>
    </citation>
    <scope>NUCLEOTIDE SEQUENCE [LARGE SCALE GENOMIC DNA]</scope>
    <source>
        <strain>ATCC 33173 / DSM 2581 / NBRC 15536 / NCIMB 2198 / 1H9</strain>
    </source>
</reference>
<reference key="2">
    <citation type="journal article" date="2014" name="Biochemistry">
        <title>Discovery of function in the enolase superfamily: D-mannonate and D-gluconate dehydratases in the D-mannonate dehydratase subgroup.</title>
        <authorList>
            <person name="Wichelecki D.J."/>
            <person name="Balthazor B.M."/>
            <person name="Chau A.C."/>
            <person name="Vetting M.W."/>
            <person name="Fedorov A.A."/>
            <person name="Fedorov E.V."/>
            <person name="Lukk T."/>
            <person name="Patskovsky Y.V."/>
            <person name="Stead M.B."/>
            <person name="Hillerich B.S."/>
            <person name="Seidel R.D."/>
            <person name="Almo S.C."/>
            <person name="Gerlt J.A."/>
        </authorList>
    </citation>
    <scope>FUNCTION</scope>
    <scope>CATALYTIC ACTIVITY</scope>
    <scope>COFACTOR</scope>
    <scope>BIOPHYSICOCHEMICAL PROPERTIES</scope>
</reference>
<feature type="chain" id="PRO_0000429882" description="D-galactonate dehydratase family member RspA">
    <location>
        <begin position="1"/>
        <end position="403"/>
    </location>
</feature>
<feature type="active site" description="Proton donor/acceptor" evidence="1">
    <location>
        <position position="159"/>
    </location>
</feature>
<feature type="active site" description="Proton donor/acceptor" evidence="1">
    <location>
        <position position="213"/>
    </location>
</feature>
<feature type="binding site" evidence="1">
    <location>
        <position position="37"/>
    </location>
    <ligand>
        <name>substrate</name>
    </ligand>
</feature>
<feature type="binding site" evidence="1">
    <location>
        <position position="122"/>
    </location>
    <ligand>
        <name>substrate</name>
    </ligand>
</feature>
<feature type="binding site" evidence="1">
    <location>
        <position position="211"/>
    </location>
    <ligand>
        <name>Mg(2+)</name>
        <dbReference type="ChEBI" id="CHEBI:18420"/>
    </ligand>
</feature>
<feature type="binding site" evidence="1">
    <location>
        <position position="237"/>
    </location>
    <ligand>
        <name>Mg(2+)</name>
        <dbReference type="ChEBI" id="CHEBI:18420"/>
    </ligand>
</feature>
<feature type="binding site" evidence="1">
    <location>
        <position position="263"/>
    </location>
    <ligand>
        <name>Mg(2+)</name>
        <dbReference type="ChEBI" id="CHEBI:18420"/>
    </ligand>
</feature>
<feature type="binding site" evidence="1">
    <location>
        <position position="263"/>
    </location>
    <ligand>
        <name>substrate</name>
    </ligand>
</feature>
<feature type="binding site" evidence="1">
    <location>
        <position position="284"/>
    </location>
    <ligand>
        <name>substrate</name>
    </ligand>
</feature>
<feature type="binding site" evidence="1">
    <location>
        <position position="313"/>
    </location>
    <ligand>
        <name>substrate</name>
    </ligand>
</feature>
<feature type="binding site" evidence="1">
    <location>
        <position position="317"/>
    </location>
    <ligand>
        <name>substrate</name>
    </ligand>
</feature>
<feature type="binding site" evidence="1">
    <location>
        <position position="340"/>
    </location>
    <ligand>
        <name>substrate</name>
    </ligand>
</feature>
<feature type="site" description="Important for activity and substrate specificity; Pro is observed in family members with low D-mannonate dehydratase activity" evidence="1">
    <location>
        <position position="315"/>
    </location>
</feature>
<protein>
    <recommendedName>
        <fullName>D-galactonate dehydratase family member RspA</fullName>
        <ecNumber>4.2.1.-</ecNumber>
    </recommendedName>
    <alternativeName>
        <fullName>D-gluconate dehydratase</fullName>
        <ecNumber>4.2.1.39</ecNumber>
    </alternativeName>
    <alternativeName>
        <fullName>D-mannonate dehydratase</fullName>
        <ecNumber>4.2.1.8</ecNumber>
    </alternativeName>
    <alternativeName>
        <fullName>Starvation sensing protein RspA homolog</fullName>
    </alternativeName>
</protein>
<keyword id="KW-0456">Lyase</keyword>
<keyword id="KW-0460">Magnesium</keyword>
<keyword id="KW-0479">Metal-binding</keyword>
<comment type="function">
    <text evidence="2">Has low dehydratase activity with D-mannonate and D-gluconate, suggesting that these are not physiological substrates and that it has no significant role in the in vivo degradation of these compounds. Has no detectable activity with a panel of 70 other acid sugars (in vitro).</text>
</comment>
<comment type="catalytic activity">
    <reaction evidence="2">
        <text>D-mannonate = 2-dehydro-3-deoxy-D-gluconate + H2O</text>
        <dbReference type="Rhea" id="RHEA:20097"/>
        <dbReference type="ChEBI" id="CHEBI:15377"/>
        <dbReference type="ChEBI" id="CHEBI:17767"/>
        <dbReference type="ChEBI" id="CHEBI:57990"/>
        <dbReference type="EC" id="4.2.1.8"/>
    </reaction>
</comment>
<comment type="catalytic activity">
    <reaction evidence="2">
        <text>D-gluconate = 2-dehydro-3-deoxy-D-gluconate + H2O</text>
        <dbReference type="Rhea" id="RHEA:21612"/>
        <dbReference type="ChEBI" id="CHEBI:15377"/>
        <dbReference type="ChEBI" id="CHEBI:18391"/>
        <dbReference type="ChEBI" id="CHEBI:57990"/>
        <dbReference type="EC" id="4.2.1.39"/>
    </reaction>
</comment>
<comment type="cofactor">
    <cofactor evidence="2">
        <name>Mg(2+)</name>
        <dbReference type="ChEBI" id="CHEBI:18420"/>
    </cofactor>
    <text evidence="2">Binds 1 Mg(2+) ion per subunit.</text>
</comment>
<comment type="biophysicochemical properties">
    <kinetics>
        <text evidence="2">kcat is 0.03 sec(-1) with D-mannonate. kcat is 0.05 sec(-1) with D-gluconate.</text>
    </kinetics>
</comment>
<comment type="similarity">
    <text evidence="3">Belongs to the mandelate racemase/muconate lactonizing enzyme family. GalD subfamily.</text>
</comment>
<gene>
    <name type="primary">rspA</name>
    <name type="ordered locus">HELO_1146</name>
</gene>
<organism>
    <name type="scientific">Halomonas elongata (strain ATCC 33173 / DSM 2581 / NBRC 15536 / NCIMB 2198 / 1H9)</name>
    <dbReference type="NCBI Taxonomy" id="768066"/>
    <lineage>
        <taxon>Bacteria</taxon>
        <taxon>Pseudomonadati</taxon>
        <taxon>Pseudomonadota</taxon>
        <taxon>Gammaproteobacteria</taxon>
        <taxon>Oceanospirillales</taxon>
        <taxon>Halomonadaceae</taxon>
        <taxon>Halomonas</taxon>
    </lineage>
</organism>